<organism>
    <name type="scientific">Triticum aestivum</name>
    <name type="common">Wheat</name>
    <dbReference type="NCBI Taxonomy" id="4565"/>
    <lineage>
        <taxon>Eukaryota</taxon>
        <taxon>Viridiplantae</taxon>
        <taxon>Streptophyta</taxon>
        <taxon>Embryophyta</taxon>
        <taxon>Tracheophyta</taxon>
        <taxon>Spermatophyta</taxon>
        <taxon>Magnoliopsida</taxon>
        <taxon>Liliopsida</taxon>
        <taxon>Poales</taxon>
        <taxon>Poaceae</taxon>
        <taxon>BOP clade</taxon>
        <taxon>Pooideae</taxon>
        <taxon>Triticodae</taxon>
        <taxon>Triticeae</taxon>
        <taxon>Triticinae</taxon>
        <taxon>Triticum</taxon>
    </lineage>
</organism>
<reference key="1">
    <citation type="journal article" date="1985" name="J. Biochem.">
        <title>Amino acid sequence of calmodulin from wheat germ.</title>
        <authorList>
            <person name="Toda H."/>
            <person name="Yazawa M."/>
            <person name="Sakiyama F."/>
            <person name="Yagi K."/>
        </authorList>
    </citation>
    <scope>PROTEIN SEQUENCE OF 2-149</scope>
    <scope>ACETYLATION AT ALA-2</scope>
    <scope>METHYLATION AT LYS-116</scope>
    <source>
        <tissue>Germ</tissue>
    </source>
</reference>
<reference key="2">
    <citation type="journal article" date="1994" name="J. Biochem.">
        <authorList>
            <person name="Toda H."/>
            <person name="Yazawa M."/>
            <person name="Sakiyama F."/>
            <person name="Yagi K."/>
        </authorList>
    </citation>
    <scope>ERRATUM OF PUBMED:4086472</scope>
    <scope>SEQUENCE REVISION</scope>
</reference>
<protein>
    <recommendedName>
        <fullName>Calmodulin</fullName>
        <shortName>CaM</shortName>
    </recommendedName>
</protein>
<name>CALM_WHEAT</name>
<evidence type="ECO:0000255" key="1">
    <source>
        <dbReference type="PROSITE-ProRule" id="PRU00448"/>
    </source>
</evidence>
<evidence type="ECO:0000269" key="2">
    <source>
    </source>
</evidence>
<evidence type="ECO:0000305" key="3"/>
<keyword id="KW-0007">Acetylation</keyword>
<keyword id="KW-0106">Calcium</keyword>
<keyword id="KW-0903">Direct protein sequencing</keyword>
<keyword id="KW-0479">Metal-binding</keyword>
<keyword id="KW-0488">Methylation</keyword>
<keyword id="KW-1185">Reference proteome</keyword>
<keyword id="KW-0677">Repeat</keyword>
<proteinExistence type="evidence at protein level"/>
<feature type="initiator methionine" description="Removed" evidence="2">
    <location>
        <position position="1"/>
    </location>
</feature>
<feature type="chain" id="PRO_0000198308" description="Calmodulin">
    <location>
        <begin position="2"/>
        <end position="149"/>
    </location>
</feature>
<feature type="domain" description="EF-hand 1" evidence="1">
    <location>
        <begin position="8"/>
        <end position="43"/>
    </location>
</feature>
<feature type="domain" description="EF-hand 2" evidence="1">
    <location>
        <begin position="44"/>
        <end position="79"/>
    </location>
</feature>
<feature type="domain" description="EF-hand 3" evidence="1">
    <location>
        <begin position="81"/>
        <end position="116"/>
    </location>
</feature>
<feature type="domain" description="EF-hand 4" evidence="1">
    <location>
        <begin position="117"/>
        <end position="149"/>
    </location>
</feature>
<feature type="binding site" evidence="1">
    <location>
        <position position="21"/>
    </location>
    <ligand>
        <name>Ca(2+)</name>
        <dbReference type="ChEBI" id="CHEBI:29108"/>
        <label>1</label>
    </ligand>
</feature>
<feature type="binding site" evidence="1">
    <location>
        <position position="23"/>
    </location>
    <ligand>
        <name>Ca(2+)</name>
        <dbReference type="ChEBI" id="CHEBI:29108"/>
        <label>1</label>
    </ligand>
</feature>
<feature type="binding site" evidence="1">
    <location>
        <position position="25"/>
    </location>
    <ligand>
        <name>Ca(2+)</name>
        <dbReference type="ChEBI" id="CHEBI:29108"/>
        <label>1</label>
    </ligand>
</feature>
<feature type="binding site" evidence="1">
    <location>
        <position position="27"/>
    </location>
    <ligand>
        <name>Ca(2+)</name>
        <dbReference type="ChEBI" id="CHEBI:29108"/>
        <label>1</label>
    </ligand>
</feature>
<feature type="binding site" evidence="1">
    <location>
        <position position="32"/>
    </location>
    <ligand>
        <name>Ca(2+)</name>
        <dbReference type="ChEBI" id="CHEBI:29108"/>
        <label>1</label>
    </ligand>
</feature>
<feature type="binding site" evidence="1">
    <location>
        <position position="57"/>
    </location>
    <ligand>
        <name>Ca(2+)</name>
        <dbReference type="ChEBI" id="CHEBI:29108"/>
        <label>2</label>
    </ligand>
</feature>
<feature type="binding site" evidence="1">
    <location>
        <position position="59"/>
    </location>
    <ligand>
        <name>Ca(2+)</name>
        <dbReference type="ChEBI" id="CHEBI:29108"/>
        <label>2</label>
    </ligand>
</feature>
<feature type="binding site" evidence="1">
    <location>
        <position position="61"/>
    </location>
    <ligand>
        <name>Ca(2+)</name>
        <dbReference type="ChEBI" id="CHEBI:29108"/>
        <label>2</label>
    </ligand>
</feature>
<feature type="binding site" evidence="1">
    <location>
        <position position="63"/>
    </location>
    <ligand>
        <name>Ca(2+)</name>
        <dbReference type="ChEBI" id="CHEBI:29108"/>
        <label>2</label>
    </ligand>
</feature>
<feature type="binding site" evidence="1">
    <location>
        <position position="68"/>
    </location>
    <ligand>
        <name>Ca(2+)</name>
        <dbReference type="ChEBI" id="CHEBI:29108"/>
        <label>2</label>
    </ligand>
</feature>
<feature type="binding site" evidence="1">
    <location>
        <position position="94"/>
    </location>
    <ligand>
        <name>Ca(2+)</name>
        <dbReference type="ChEBI" id="CHEBI:29108"/>
        <label>3</label>
    </ligand>
</feature>
<feature type="binding site" evidence="1">
    <location>
        <position position="96"/>
    </location>
    <ligand>
        <name>Ca(2+)</name>
        <dbReference type="ChEBI" id="CHEBI:29108"/>
        <label>3</label>
    </ligand>
</feature>
<feature type="binding site" evidence="1">
    <location>
        <position position="98"/>
    </location>
    <ligand>
        <name>Ca(2+)</name>
        <dbReference type="ChEBI" id="CHEBI:29108"/>
        <label>3</label>
    </ligand>
</feature>
<feature type="binding site" evidence="1">
    <location>
        <position position="105"/>
    </location>
    <ligand>
        <name>Ca(2+)</name>
        <dbReference type="ChEBI" id="CHEBI:29108"/>
        <label>3</label>
    </ligand>
</feature>
<feature type="binding site" evidence="1">
    <location>
        <position position="130"/>
    </location>
    <ligand>
        <name>Ca(2+)</name>
        <dbReference type="ChEBI" id="CHEBI:29108"/>
        <label>4</label>
    </ligand>
</feature>
<feature type="binding site" evidence="1">
    <location>
        <position position="132"/>
    </location>
    <ligand>
        <name>Ca(2+)</name>
        <dbReference type="ChEBI" id="CHEBI:29108"/>
        <label>4</label>
    </ligand>
</feature>
<feature type="binding site" evidence="1">
    <location>
        <position position="134"/>
    </location>
    <ligand>
        <name>Ca(2+)</name>
        <dbReference type="ChEBI" id="CHEBI:29108"/>
        <label>4</label>
    </ligand>
</feature>
<feature type="binding site" evidence="1">
    <location>
        <position position="136"/>
    </location>
    <ligand>
        <name>Ca(2+)</name>
        <dbReference type="ChEBI" id="CHEBI:29108"/>
        <label>4</label>
    </ligand>
</feature>
<feature type="binding site" evidence="1">
    <location>
        <position position="141"/>
    </location>
    <ligand>
        <name>Ca(2+)</name>
        <dbReference type="ChEBI" id="CHEBI:29108"/>
        <label>4</label>
    </ligand>
</feature>
<feature type="modified residue" description="N-acetylalanine" evidence="2">
    <location>
        <position position="2"/>
    </location>
</feature>
<feature type="modified residue" description="N6,N6,N6-trimethyllysine" evidence="2">
    <location>
        <position position="116"/>
    </location>
</feature>
<accession>P04464</accession>
<comment type="function">
    <text>Calmodulin mediates the control of a large number of enzymes, ion channels and other proteins by Ca(2+). Among the enzymes to be stimulated by the calmodulin-Ca(2+) complex are a number of protein kinases and phosphatases.</text>
</comment>
<comment type="miscellaneous">
    <text>This protein has four functional calcium-binding sites.</text>
</comment>
<comment type="similarity">
    <text evidence="3">Belongs to the calmodulin family.</text>
</comment>
<dbReference type="PIR" id="A03025">
    <property type="entry name" value="MCWT"/>
</dbReference>
<dbReference type="SMR" id="P04464"/>
<dbReference type="STRING" id="4565.P04464"/>
<dbReference type="iPTMnet" id="P04464"/>
<dbReference type="MetOSite" id="P04464"/>
<dbReference type="PaxDb" id="4565-Traes_3AS_3A0D17C58.1"/>
<dbReference type="eggNOG" id="KOG0027">
    <property type="taxonomic scope" value="Eukaryota"/>
</dbReference>
<dbReference type="OrthoDB" id="26525at2759"/>
<dbReference type="Proteomes" id="UP000019116">
    <property type="component" value="Unplaced"/>
</dbReference>
<dbReference type="ExpressionAtlas" id="P04464">
    <property type="expression patterns" value="baseline and differential"/>
</dbReference>
<dbReference type="GO" id="GO:0005737">
    <property type="term" value="C:cytoplasm"/>
    <property type="evidence" value="ECO:0000314"/>
    <property type="project" value="CAFA"/>
</dbReference>
<dbReference type="GO" id="GO:0005509">
    <property type="term" value="F:calcium ion binding"/>
    <property type="evidence" value="ECO:0000314"/>
    <property type="project" value="CAFA"/>
</dbReference>
<dbReference type="GO" id="GO:0030234">
    <property type="term" value="F:enzyme regulator activity"/>
    <property type="evidence" value="ECO:0000318"/>
    <property type="project" value="GO_Central"/>
</dbReference>
<dbReference type="GO" id="GO:0019904">
    <property type="term" value="F:protein domain specific binding"/>
    <property type="evidence" value="ECO:0000353"/>
    <property type="project" value="CAFA"/>
</dbReference>
<dbReference type="CDD" id="cd00051">
    <property type="entry name" value="EFh"/>
    <property type="match status" value="2"/>
</dbReference>
<dbReference type="FunFam" id="1.10.238.10:FF:000034">
    <property type="entry name" value="Calmodulin"/>
    <property type="match status" value="1"/>
</dbReference>
<dbReference type="FunFam" id="1.10.238.10:FF:000042">
    <property type="entry name" value="Calmodulin"/>
    <property type="match status" value="1"/>
</dbReference>
<dbReference type="Gene3D" id="1.10.238.10">
    <property type="entry name" value="EF-hand"/>
    <property type="match status" value="3"/>
</dbReference>
<dbReference type="InterPro" id="IPR050230">
    <property type="entry name" value="CALM/Myosin/TropC-like"/>
</dbReference>
<dbReference type="InterPro" id="IPR011992">
    <property type="entry name" value="EF-hand-dom_pair"/>
</dbReference>
<dbReference type="InterPro" id="IPR018247">
    <property type="entry name" value="EF_Hand_1_Ca_BS"/>
</dbReference>
<dbReference type="InterPro" id="IPR002048">
    <property type="entry name" value="EF_hand_dom"/>
</dbReference>
<dbReference type="PANTHER" id="PTHR23048:SF53">
    <property type="entry name" value="CALMODULIN"/>
    <property type="match status" value="1"/>
</dbReference>
<dbReference type="PANTHER" id="PTHR23048">
    <property type="entry name" value="MYOSIN LIGHT CHAIN 1, 3"/>
    <property type="match status" value="1"/>
</dbReference>
<dbReference type="Pfam" id="PF13499">
    <property type="entry name" value="EF-hand_7"/>
    <property type="match status" value="2"/>
</dbReference>
<dbReference type="SMART" id="SM00054">
    <property type="entry name" value="EFh"/>
    <property type="match status" value="4"/>
</dbReference>
<dbReference type="SUPFAM" id="SSF47473">
    <property type="entry name" value="EF-hand"/>
    <property type="match status" value="1"/>
</dbReference>
<dbReference type="PROSITE" id="PS00018">
    <property type="entry name" value="EF_HAND_1"/>
    <property type="match status" value="4"/>
</dbReference>
<dbReference type="PROSITE" id="PS50222">
    <property type="entry name" value="EF_HAND_2"/>
    <property type="match status" value="4"/>
</dbReference>
<sequence length="149" mass="16847">MADQLTDEQIAEFKEAFSLFDKDGDGCITTKELGTVMRSLGQNPTEAELQDMINEVDADGNGTIDFPEFLNLMARKMKDTDSEEELKEAFRVFDKDQDGFISAAELRHVMTNLGEKLTDEEVDEMIREADVDGDGQINYEEFVKVMMAK</sequence>